<feature type="chain" id="PRO_0000115945" description="Tripartite terminase subunit 3">
    <location>
        <begin position="1"/>
        <end position="683"/>
    </location>
</feature>
<feature type="short sequence motif" description="Walker A motif" evidence="1">
    <location>
        <begin position="217"/>
        <end position="224"/>
    </location>
</feature>
<feature type="short sequence motif" description="Walker B motif">
    <location>
        <begin position="312"/>
        <end position="317"/>
    </location>
</feature>
<feature type="active site" description="For ATPase activity" evidence="1">
    <location>
        <position position="317"/>
    </location>
</feature>
<feature type="active site" description="For nuclease activity" evidence="1">
    <location>
        <position position="472"/>
    </location>
</feature>
<feature type="active site" description="For nuclease activity" evidence="1">
    <location>
        <position position="546"/>
    </location>
</feature>
<feature type="active site" description="For nuclease activity" evidence="1">
    <location>
        <position position="658"/>
    </location>
</feature>
<name>TRM3_SHV21</name>
<keyword id="KW-0238">DNA-binding</keyword>
<keyword id="KW-1048">Host nucleus</keyword>
<keyword id="KW-0378">Hydrolase</keyword>
<keyword id="KW-1185">Reference proteome</keyword>
<keyword id="KW-0231">Viral genome packaging</keyword>
<keyword id="KW-1188">Viral release from host cell</keyword>
<accession>Q01020</accession>
<dbReference type="EC" id="3.1.-.-" evidence="1"/>
<dbReference type="EMBL" id="X64346">
    <property type="protein sequence ID" value="CAA45657.1"/>
    <property type="molecule type" value="Genomic_DNA"/>
</dbReference>
<dbReference type="RefSeq" id="NP_040231.1">
    <property type="nucleotide sequence ID" value="NC_001350.1"/>
</dbReference>
<dbReference type="SMR" id="Q01020"/>
<dbReference type="KEGG" id="vg:1682488"/>
<dbReference type="Proteomes" id="UP000000587">
    <property type="component" value="Segment"/>
</dbReference>
<dbReference type="GO" id="GO:0042025">
    <property type="term" value="C:host cell nucleus"/>
    <property type="evidence" value="ECO:0007669"/>
    <property type="project" value="UniProtKB-SubCell"/>
</dbReference>
<dbReference type="GO" id="GO:0003677">
    <property type="term" value="F:DNA binding"/>
    <property type="evidence" value="ECO:0007669"/>
    <property type="project" value="UniProtKB-KW"/>
</dbReference>
<dbReference type="GO" id="GO:0016787">
    <property type="term" value="F:hydrolase activity"/>
    <property type="evidence" value="ECO:0007669"/>
    <property type="project" value="UniProtKB-KW"/>
</dbReference>
<dbReference type="GO" id="GO:0051276">
    <property type="term" value="P:chromosome organization"/>
    <property type="evidence" value="ECO:0007669"/>
    <property type="project" value="InterPro"/>
</dbReference>
<dbReference type="Gene3D" id="3.30.420.320">
    <property type="match status" value="1"/>
</dbReference>
<dbReference type="Gene3D" id="3.40.50.300">
    <property type="entry name" value="P-loop containing nucleotide triphosphate hydrolases"/>
    <property type="match status" value="1"/>
</dbReference>
<dbReference type="HAMAP" id="MF_04013">
    <property type="entry name" value="HSV_TRM3"/>
    <property type="match status" value="1"/>
</dbReference>
<dbReference type="InterPro" id="IPR003498">
    <property type="entry name" value="DNA_pack_C"/>
</dbReference>
<dbReference type="InterPro" id="IPR038435">
    <property type="entry name" value="DNA_pack_C_sf"/>
</dbReference>
<dbReference type="InterPro" id="IPR003499">
    <property type="entry name" value="DNA_pack_N"/>
</dbReference>
<dbReference type="InterPro" id="IPR033663">
    <property type="entry name" value="HSV_TRM3"/>
</dbReference>
<dbReference type="InterPro" id="IPR027417">
    <property type="entry name" value="P-loop_NTPase"/>
</dbReference>
<dbReference type="Pfam" id="PF02499">
    <property type="entry name" value="DNA_pack_C"/>
    <property type="match status" value="1"/>
</dbReference>
<dbReference type="Pfam" id="PF02500">
    <property type="entry name" value="DNA_pack_N"/>
    <property type="match status" value="1"/>
</dbReference>
<proteinExistence type="inferred from homology"/>
<comment type="function">
    <text evidence="1">Component of the molecular motor that translocates viral genomic DNA in empty capsid during DNA packaging. Forms a tripartite terminase complex together with TRM1 and TRM2 in the host cytoplasm. Once the complex reaches the host nucleus, it interacts with the capsid portal vertex. This portal forms a ring in which genomic DNA is translocated into the capsid. TRM3 carries an RNase H-like nuclease activity that plays an important role for the cleavage of concatemeric viral DNA into unit length genomes.</text>
</comment>
<comment type="subunit">
    <text evidence="1">Interacts with the terminase subunits TRM1 and TRM2. Interacts with portal protein.</text>
</comment>
<comment type="subcellular location">
    <subcellularLocation>
        <location evidence="1">Host nucleus</location>
    </subcellularLocation>
    <text evidence="1">Responsible for the nuclear localization of the two others subunits TRM1 and TRM2.</text>
</comment>
<comment type="similarity">
    <text evidence="1">Belongs to the herpesviridae TRM3 protein family.</text>
</comment>
<gene>
    <name evidence="1" type="primary">TRM3</name>
    <name type="ordered locus">29</name>
</gene>
<organismHost>
    <name type="scientific">Saimiri sciureus</name>
    <name type="common">Common squirrel monkey</name>
    <dbReference type="NCBI Taxonomy" id="9521"/>
</organismHost>
<organism>
    <name type="scientific">Saimiriine herpesvirus 2 (strain 11)</name>
    <name type="common">SaHV-2</name>
    <name type="synonym">Herpesvirus saimiri</name>
    <dbReference type="NCBI Taxonomy" id="10383"/>
    <lineage>
        <taxon>Viruses</taxon>
        <taxon>Duplodnaviria</taxon>
        <taxon>Heunggongvirae</taxon>
        <taxon>Peploviricota</taxon>
        <taxon>Herviviricetes</taxon>
        <taxon>Herpesvirales</taxon>
        <taxon>Orthoherpesviridae</taxon>
        <taxon>Gammaherpesvirinae</taxon>
        <taxon>Rhadinovirus</taxon>
        <taxon>Rhadinovirus saimiriinegamma2</taxon>
        <taxon>Saimiriine herpesvirus 2</taxon>
    </lineage>
</organism>
<evidence type="ECO:0000255" key="1">
    <source>
        <dbReference type="HAMAP-Rule" id="MF_04013"/>
    </source>
</evidence>
<protein>
    <recommendedName>
        <fullName evidence="1">Tripartite terminase subunit 3</fullName>
        <ecNumber evidence="1">3.1.-.-</ecNumber>
    </recommendedName>
    <alternativeName>
        <fullName evidence="1">Terminase large subunit</fullName>
    </alternativeName>
</protein>
<sequence>MLLLKAKKAIIENLSEVSSTQAETDWDMSTPTIITNTSKSERTAYSKIGVIPSVNLYSSTLTSFCKLYHPLTLNQTQPQTGTLRLLPHEKPLILQDLSNYVKLLTSQNVCHDTEANTEYNAAVQTQKTSMECPTYLELRQFVINLSSFLNGCYVKRSTHIEPFQLQLILHTFYFLISIKSPESTNRLFDIFKEYFGLREMDPDMLQIFKQKASIFLIPRRHGKTWIVVAIISMLLTSVENIHVGYVAHQKHVANSVFTEIINTLQKWFPSRYIDIKKENGTIIYKSPDKKPSTLMCATCFNKNSIRGQTFNLLYIDEANFIKKDSLPAILGFMLQKDAKLIFISSVNSGDRATSFLFNLKNASEKMLNIVNYICPDHKDDFSLQDSLISCPCYKLYIPTYITIDETIKNTTNLFLDGAFTTELMGDMSGISKSNMHKVISEMAITQFDLCRADTTKPEITQCLNSTMYIYIDPAYTNNSEASGTGIGAILTFKNNSSKCIIVGMEHYFLKDLTGTATYQIASCACSLIRASLVLYPHIQCVHVAVEGNSSQDSAVAISTLINECSPIKVYFIHYKDKTTTMQWPIYMLGAEKSIAFESFIYAINSGTISASQSIISNTIKLSFDPISYLIEQIRSIRCYPLRDGSHTYCAKKRTVSDDVLVAVVMAYFFATSNKHIFKPLNST</sequence>
<reference key="1">
    <citation type="journal article" date="1992" name="J. Virol.">
        <title>Primary structure of the herpesvirus saimiri genome.</title>
        <authorList>
            <person name="Albrecht J.-C."/>
            <person name="Nicholas J."/>
            <person name="Biller D."/>
            <person name="Cameron K.R."/>
            <person name="Biesinger B."/>
            <person name="Newman C."/>
            <person name="Wittmann S."/>
            <person name="Craxton M.A."/>
            <person name="Coleman H."/>
            <person name="Fleckenstein B."/>
            <person name="Honess R.W."/>
        </authorList>
    </citation>
    <scope>NUCLEOTIDE SEQUENCE [LARGE SCALE GENOMIC DNA]</scope>
</reference>